<organism>
    <name type="scientific">Nostoc punctiforme (strain ATCC 29133 / PCC 73102)</name>
    <dbReference type="NCBI Taxonomy" id="63737"/>
    <lineage>
        <taxon>Bacteria</taxon>
        <taxon>Bacillati</taxon>
        <taxon>Cyanobacteriota</taxon>
        <taxon>Cyanophyceae</taxon>
        <taxon>Nostocales</taxon>
        <taxon>Nostocaceae</taxon>
        <taxon>Nostoc</taxon>
    </lineage>
</organism>
<reference key="1">
    <citation type="journal article" date="2013" name="Plant Physiol.">
        <title>A Nostoc punctiforme Sugar Transporter Necessary to Establish a Cyanobacterium-Plant Symbiosis.</title>
        <authorList>
            <person name="Ekman M."/>
            <person name="Picossi S."/>
            <person name="Campbell E.L."/>
            <person name="Meeks J.C."/>
            <person name="Flores E."/>
        </authorList>
    </citation>
    <scope>NUCLEOTIDE SEQUENCE [LARGE SCALE GENOMIC DNA]</scope>
    <source>
        <strain>ATCC 29133 / PCC 73102</strain>
    </source>
</reference>
<keyword id="KW-0450">Lipoyl</keyword>
<keyword id="KW-1185">Reference proteome</keyword>
<comment type="function">
    <text evidence="1">The glycine cleavage system catalyzes the degradation of glycine. The H protein shuttles the methylamine group of glycine from the P protein to the T protein.</text>
</comment>
<comment type="cofactor">
    <cofactor evidence="1">
        <name>(R)-lipoate</name>
        <dbReference type="ChEBI" id="CHEBI:83088"/>
    </cofactor>
    <text evidence="1">Binds 1 lipoyl cofactor covalently.</text>
</comment>
<comment type="subunit">
    <text evidence="1">The glycine cleavage system is composed of four proteins: P, T, L and H.</text>
</comment>
<comment type="similarity">
    <text evidence="1">Belongs to the GcvH family.</text>
</comment>
<sequence length="129" mass="14455">MSFEYPQDFRYLDSHEYVRIDGEIATIGITEFAVHELGDIVFLELPEIGDALTRGENFGTIESVKAVEELNSPVTGTVIERNEALINSPEEVSEDPYGEGWFLKVRVNDPGEIEDALTADEYRAQVEGE</sequence>
<protein>
    <recommendedName>
        <fullName evidence="1">Glycine cleavage system H protein</fullName>
    </recommendedName>
</protein>
<proteinExistence type="inferred from homology"/>
<name>GCSH_NOSP7</name>
<evidence type="ECO:0000255" key="1">
    <source>
        <dbReference type="HAMAP-Rule" id="MF_00272"/>
    </source>
</evidence>
<evidence type="ECO:0000255" key="2">
    <source>
        <dbReference type="PROSITE-ProRule" id="PRU01066"/>
    </source>
</evidence>
<dbReference type="EMBL" id="CP001037">
    <property type="protein sequence ID" value="ACC82140.1"/>
    <property type="molecule type" value="Genomic_DNA"/>
</dbReference>
<dbReference type="RefSeq" id="WP_012410111.1">
    <property type="nucleotide sequence ID" value="NC_010628.1"/>
</dbReference>
<dbReference type="SMR" id="B2J428"/>
<dbReference type="STRING" id="63737.Npun_R3755"/>
<dbReference type="EnsemblBacteria" id="ACC82140">
    <property type="protein sequence ID" value="ACC82140"/>
    <property type="gene ID" value="Npun_R3755"/>
</dbReference>
<dbReference type="KEGG" id="npu:Npun_R3755"/>
<dbReference type="eggNOG" id="COG0509">
    <property type="taxonomic scope" value="Bacteria"/>
</dbReference>
<dbReference type="HOGENOM" id="CLU_097408_2_2_3"/>
<dbReference type="OrthoDB" id="9796712at2"/>
<dbReference type="PhylomeDB" id="B2J428"/>
<dbReference type="Proteomes" id="UP000001191">
    <property type="component" value="Chromosome"/>
</dbReference>
<dbReference type="GO" id="GO:0005829">
    <property type="term" value="C:cytosol"/>
    <property type="evidence" value="ECO:0007669"/>
    <property type="project" value="TreeGrafter"/>
</dbReference>
<dbReference type="GO" id="GO:0005960">
    <property type="term" value="C:glycine cleavage complex"/>
    <property type="evidence" value="ECO:0007669"/>
    <property type="project" value="InterPro"/>
</dbReference>
<dbReference type="GO" id="GO:0019464">
    <property type="term" value="P:glycine decarboxylation via glycine cleavage system"/>
    <property type="evidence" value="ECO:0007669"/>
    <property type="project" value="UniProtKB-UniRule"/>
</dbReference>
<dbReference type="CDD" id="cd06848">
    <property type="entry name" value="GCS_H"/>
    <property type="match status" value="1"/>
</dbReference>
<dbReference type="Gene3D" id="2.40.50.100">
    <property type="match status" value="1"/>
</dbReference>
<dbReference type="HAMAP" id="MF_00272">
    <property type="entry name" value="GcvH"/>
    <property type="match status" value="1"/>
</dbReference>
<dbReference type="InterPro" id="IPR003016">
    <property type="entry name" value="2-oxoA_DH_lipoyl-BS"/>
</dbReference>
<dbReference type="InterPro" id="IPR000089">
    <property type="entry name" value="Biotin_lipoyl"/>
</dbReference>
<dbReference type="InterPro" id="IPR002930">
    <property type="entry name" value="GCV_H"/>
</dbReference>
<dbReference type="InterPro" id="IPR033753">
    <property type="entry name" value="GCV_H/Fam206"/>
</dbReference>
<dbReference type="InterPro" id="IPR017453">
    <property type="entry name" value="GCV_H_sub"/>
</dbReference>
<dbReference type="InterPro" id="IPR011053">
    <property type="entry name" value="Single_hybrid_motif"/>
</dbReference>
<dbReference type="NCBIfam" id="TIGR00527">
    <property type="entry name" value="gcvH"/>
    <property type="match status" value="1"/>
</dbReference>
<dbReference type="NCBIfam" id="NF002270">
    <property type="entry name" value="PRK01202.1"/>
    <property type="match status" value="1"/>
</dbReference>
<dbReference type="PANTHER" id="PTHR11715">
    <property type="entry name" value="GLYCINE CLEAVAGE SYSTEM H PROTEIN"/>
    <property type="match status" value="1"/>
</dbReference>
<dbReference type="PANTHER" id="PTHR11715:SF3">
    <property type="entry name" value="GLYCINE CLEAVAGE SYSTEM H PROTEIN-RELATED"/>
    <property type="match status" value="1"/>
</dbReference>
<dbReference type="Pfam" id="PF01597">
    <property type="entry name" value="GCV_H"/>
    <property type="match status" value="1"/>
</dbReference>
<dbReference type="SUPFAM" id="SSF51230">
    <property type="entry name" value="Single hybrid motif"/>
    <property type="match status" value="1"/>
</dbReference>
<dbReference type="PROSITE" id="PS50968">
    <property type="entry name" value="BIOTINYL_LIPOYL"/>
    <property type="match status" value="1"/>
</dbReference>
<dbReference type="PROSITE" id="PS00189">
    <property type="entry name" value="LIPOYL"/>
    <property type="match status" value="1"/>
</dbReference>
<feature type="chain" id="PRO_1000114532" description="Glycine cleavage system H protein">
    <location>
        <begin position="1"/>
        <end position="129"/>
    </location>
</feature>
<feature type="domain" description="Lipoyl-binding" evidence="2">
    <location>
        <begin position="24"/>
        <end position="106"/>
    </location>
</feature>
<feature type="modified residue" description="N6-lipoyllysine" evidence="1">
    <location>
        <position position="65"/>
    </location>
</feature>
<accession>B2J428</accession>
<gene>
    <name evidence="1" type="primary">gcvH</name>
    <name type="ordered locus">Npun_R3755</name>
</gene>